<dbReference type="EC" id="3.4.21.53" evidence="1"/>
<dbReference type="EMBL" id="BX842651">
    <property type="protein sequence ID" value="CAE79984.1"/>
    <property type="molecule type" value="Genomic_DNA"/>
</dbReference>
<dbReference type="RefSeq" id="WP_011164586.1">
    <property type="nucleotide sequence ID" value="NC_005363.1"/>
</dbReference>
<dbReference type="SMR" id="Q6ML73"/>
<dbReference type="STRING" id="264462.Bd2144"/>
<dbReference type="GeneID" id="93013086"/>
<dbReference type="KEGG" id="bba:Bd2144"/>
<dbReference type="eggNOG" id="COG0466">
    <property type="taxonomic scope" value="Bacteria"/>
</dbReference>
<dbReference type="HOGENOM" id="CLU_004109_4_3_7"/>
<dbReference type="Proteomes" id="UP000008080">
    <property type="component" value="Chromosome"/>
</dbReference>
<dbReference type="GO" id="GO:0005737">
    <property type="term" value="C:cytoplasm"/>
    <property type="evidence" value="ECO:0007669"/>
    <property type="project" value="UniProtKB-SubCell"/>
</dbReference>
<dbReference type="GO" id="GO:0005524">
    <property type="term" value="F:ATP binding"/>
    <property type="evidence" value="ECO:0007669"/>
    <property type="project" value="UniProtKB-UniRule"/>
</dbReference>
<dbReference type="GO" id="GO:0016887">
    <property type="term" value="F:ATP hydrolysis activity"/>
    <property type="evidence" value="ECO:0007669"/>
    <property type="project" value="UniProtKB-UniRule"/>
</dbReference>
<dbReference type="GO" id="GO:0004176">
    <property type="term" value="F:ATP-dependent peptidase activity"/>
    <property type="evidence" value="ECO:0007669"/>
    <property type="project" value="UniProtKB-UniRule"/>
</dbReference>
<dbReference type="GO" id="GO:0043565">
    <property type="term" value="F:sequence-specific DNA binding"/>
    <property type="evidence" value="ECO:0007669"/>
    <property type="project" value="UniProtKB-UniRule"/>
</dbReference>
<dbReference type="GO" id="GO:0004252">
    <property type="term" value="F:serine-type endopeptidase activity"/>
    <property type="evidence" value="ECO:0007669"/>
    <property type="project" value="UniProtKB-UniRule"/>
</dbReference>
<dbReference type="GO" id="GO:0034605">
    <property type="term" value="P:cellular response to heat"/>
    <property type="evidence" value="ECO:0007669"/>
    <property type="project" value="UniProtKB-UniRule"/>
</dbReference>
<dbReference type="GO" id="GO:0006515">
    <property type="term" value="P:protein quality control for misfolded or incompletely synthesized proteins"/>
    <property type="evidence" value="ECO:0007669"/>
    <property type="project" value="UniProtKB-UniRule"/>
</dbReference>
<dbReference type="CDD" id="cd19500">
    <property type="entry name" value="RecA-like_Lon"/>
    <property type="match status" value="1"/>
</dbReference>
<dbReference type="FunFam" id="3.40.50.300:FF:000021">
    <property type="entry name" value="Lon protease homolog"/>
    <property type="match status" value="1"/>
</dbReference>
<dbReference type="Gene3D" id="1.10.8.60">
    <property type="match status" value="1"/>
</dbReference>
<dbReference type="Gene3D" id="1.20.5.5270">
    <property type="match status" value="1"/>
</dbReference>
<dbReference type="Gene3D" id="1.20.58.1480">
    <property type="match status" value="1"/>
</dbReference>
<dbReference type="Gene3D" id="3.30.230.10">
    <property type="match status" value="1"/>
</dbReference>
<dbReference type="Gene3D" id="2.30.130.40">
    <property type="entry name" value="LON domain-like"/>
    <property type="match status" value="1"/>
</dbReference>
<dbReference type="Gene3D" id="3.40.50.300">
    <property type="entry name" value="P-loop containing nucleotide triphosphate hydrolases"/>
    <property type="match status" value="1"/>
</dbReference>
<dbReference type="HAMAP" id="MF_01973">
    <property type="entry name" value="lon_bact"/>
    <property type="match status" value="1"/>
</dbReference>
<dbReference type="InterPro" id="IPR003593">
    <property type="entry name" value="AAA+_ATPase"/>
</dbReference>
<dbReference type="InterPro" id="IPR003959">
    <property type="entry name" value="ATPase_AAA_core"/>
</dbReference>
<dbReference type="InterPro" id="IPR027543">
    <property type="entry name" value="Lon_bac"/>
</dbReference>
<dbReference type="InterPro" id="IPR004815">
    <property type="entry name" value="Lon_bac/euk-typ"/>
</dbReference>
<dbReference type="InterPro" id="IPR054594">
    <property type="entry name" value="Lon_lid"/>
</dbReference>
<dbReference type="InterPro" id="IPR008269">
    <property type="entry name" value="Lon_proteolytic"/>
</dbReference>
<dbReference type="InterPro" id="IPR027065">
    <property type="entry name" value="Lon_Prtase"/>
</dbReference>
<dbReference type="InterPro" id="IPR003111">
    <property type="entry name" value="Lon_prtase_N"/>
</dbReference>
<dbReference type="InterPro" id="IPR046336">
    <property type="entry name" value="Lon_prtase_N_sf"/>
</dbReference>
<dbReference type="InterPro" id="IPR027417">
    <property type="entry name" value="P-loop_NTPase"/>
</dbReference>
<dbReference type="InterPro" id="IPR008268">
    <property type="entry name" value="Peptidase_S16_AS"/>
</dbReference>
<dbReference type="InterPro" id="IPR015947">
    <property type="entry name" value="PUA-like_sf"/>
</dbReference>
<dbReference type="InterPro" id="IPR020568">
    <property type="entry name" value="Ribosomal_Su5_D2-typ_SF"/>
</dbReference>
<dbReference type="InterPro" id="IPR014721">
    <property type="entry name" value="Ribsml_uS5_D2-typ_fold_subgr"/>
</dbReference>
<dbReference type="NCBIfam" id="TIGR00763">
    <property type="entry name" value="lon"/>
    <property type="match status" value="1"/>
</dbReference>
<dbReference type="PANTHER" id="PTHR10046">
    <property type="entry name" value="ATP DEPENDENT LON PROTEASE FAMILY MEMBER"/>
    <property type="match status" value="1"/>
</dbReference>
<dbReference type="Pfam" id="PF00004">
    <property type="entry name" value="AAA"/>
    <property type="match status" value="1"/>
</dbReference>
<dbReference type="Pfam" id="PF05362">
    <property type="entry name" value="Lon_C"/>
    <property type="match status" value="1"/>
</dbReference>
<dbReference type="Pfam" id="PF22667">
    <property type="entry name" value="Lon_lid"/>
    <property type="match status" value="1"/>
</dbReference>
<dbReference type="Pfam" id="PF02190">
    <property type="entry name" value="LON_substr_bdg"/>
    <property type="match status" value="1"/>
</dbReference>
<dbReference type="PIRSF" id="PIRSF001174">
    <property type="entry name" value="Lon_proteas"/>
    <property type="match status" value="1"/>
</dbReference>
<dbReference type="PRINTS" id="PR00830">
    <property type="entry name" value="ENDOLAPTASE"/>
</dbReference>
<dbReference type="SMART" id="SM00382">
    <property type="entry name" value="AAA"/>
    <property type="match status" value="1"/>
</dbReference>
<dbReference type="SMART" id="SM00464">
    <property type="entry name" value="LON"/>
    <property type="match status" value="1"/>
</dbReference>
<dbReference type="SUPFAM" id="SSF52540">
    <property type="entry name" value="P-loop containing nucleoside triphosphate hydrolases"/>
    <property type="match status" value="1"/>
</dbReference>
<dbReference type="SUPFAM" id="SSF88697">
    <property type="entry name" value="PUA domain-like"/>
    <property type="match status" value="1"/>
</dbReference>
<dbReference type="SUPFAM" id="SSF54211">
    <property type="entry name" value="Ribosomal protein S5 domain 2-like"/>
    <property type="match status" value="1"/>
</dbReference>
<dbReference type="PROSITE" id="PS51787">
    <property type="entry name" value="LON_N"/>
    <property type="match status" value="1"/>
</dbReference>
<dbReference type="PROSITE" id="PS51786">
    <property type="entry name" value="LON_PROTEOLYTIC"/>
    <property type="match status" value="1"/>
</dbReference>
<dbReference type="PROSITE" id="PS01046">
    <property type="entry name" value="LON_SER"/>
    <property type="match status" value="1"/>
</dbReference>
<organism>
    <name type="scientific">Bdellovibrio bacteriovorus (strain ATCC 15356 / DSM 50701 / NCIMB 9529 / HD100)</name>
    <dbReference type="NCBI Taxonomy" id="264462"/>
    <lineage>
        <taxon>Bacteria</taxon>
        <taxon>Pseudomonadati</taxon>
        <taxon>Bdellovibrionota</taxon>
        <taxon>Bdellovibrionia</taxon>
        <taxon>Bdellovibrionales</taxon>
        <taxon>Pseudobdellovibrionaceae</taxon>
        <taxon>Bdellovibrio</taxon>
    </lineage>
</organism>
<protein>
    <recommendedName>
        <fullName evidence="1">Lon protease 1</fullName>
        <ecNumber evidence="1">3.4.21.53</ecNumber>
    </recommendedName>
    <alternativeName>
        <fullName evidence="1">ATP-dependent protease La 1</fullName>
    </alternativeName>
</protein>
<comment type="function">
    <text evidence="1">ATP-dependent serine protease that mediates the selective degradation of mutant and abnormal proteins as well as certain short-lived regulatory proteins. Required for cellular homeostasis and for survival from DNA damage and developmental changes induced by stress. Degrades polypeptides processively to yield small peptide fragments that are 5 to 10 amino acids long. Binds to DNA in a double-stranded, site-specific manner.</text>
</comment>
<comment type="catalytic activity">
    <reaction evidence="1">
        <text>Hydrolysis of proteins in presence of ATP.</text>
        <dbReference type="EC" id="3.4.21.53"/>
    </reaction>
</comment>
<comment type="subunit">
    <text evidence="1">Homohexamer. Organized in a ring with a central cavity.</text>
</comment>
<comment type="subcellular location">
    <subcellularLocation>
        <location evidence="1">Cytoplasm</location>
    </subcellularLocation>
</comment>
<comment type="induction">
    <text evidence="1">By heat shock.</text>
</comment>
<comment type="similarity">
    <text evidence="1">Belongs to the peptidase S16 family.</text>
</comment>
<keyword id="KW-0067">ATP-binding</keyword>
<keyword id="KW-0963">Cytoplasm</keyword>
<keyword id="KW-0378">Hydrolase</keyword>
<keyword id="KW-0547">Nucleotide-binding</keyword>
<keyword id="KW-0645">Protease</keyword>
<keyword id="KW-1185">Reference proteome</keyword>
<keyword id="KW-0720">Serine protease</keyword>
<keyword id="KW-0346">Stress response</keyword>
<proteinExistence type="inferred from homology"/>
<sequence>MSYVSGYVPVIPLKNSVLFPDISMPLRIGREKSIAALQKALRDNHWVILLTQKNPNASVDKIEDLYQVGTLAKVESFRMEEDGSYNIFVKAHQRVRLIHSRDSEGHIEAQTEALEDSGRLDKKTEEALLSSLRQLSDDLLDLLPGNTRQIREMIAEIEDLQTLVNMCAAYADINISDKQEILEIPLLKDRALKLLDRLQELKERLKIQRGIRDKLQESFQQNQKESILREQMRVIREELGDHEGEDLFAKFKDKIDKAGMPPEALELAKNQLRRLETSNSASPEYQMIRTHLELMTSLPWNQSSAQQDIDLEAAERVLNEDHYGLEKIKKRILQHLAVMKLRKSQQGSILMFIGPPGVGKTSLGKSIARALGKKYVRVALGGVRDDAEIRGHRRTYIGALPGRIIAGIKKAGENDPVFILDEIDKLTRGFGGDPASAMLEVLDPEQNNTFQDHYLDTPFDLSKVFFIATANSLEGIPLPLLDRMEVIDLSGYTVDEKRQIARSHLWPKQLKEHGLEENQLQITDQALTKLLTHYTREAGVRDLQRKIASICKHMSLKIIKSEGLPLLVEEQDLEDIFGAERFSADMIGSLLPPGVVTGLAWTPVGGDILFIESAQMPGKGNLLLTGQLGEVMQESAKIALTLLKSRLPLLDPLLDFAKKDIHVHVPAGAIPKDGPSAGITMLTSMASMLLNKPVDPKVAMTGEISLRGSVMPVGGIKEKVIAAHRAGVQEILLCKRNEKDLREIPEDIRKDLRFHFVEDVNEVLKITLGVNVPKWDQVQLPPPSPLSSTDAGT</sequence>
<name>LON1_BDEBA</name>
<accession>Q6ML73</accession>
<gene>
    <name evidence="1" type="primary">lon1</name>
    <name type="ordered locus">Bd2144</name>
</gene>
<feature type="chain" id="PRO_0000396538" description="Lon protease 1">
    <location>
        <begin position="1"/>
        <end position="793"/>
    </location>
</feature>
<feature type="domain" description="Lon N-terminal" evidence="3">
    <location>
        <begin position="8"/>
        <end position="202"/>
    </location>
</feature>
<feature type="domain" description="Lon proteolytic" evidence="2">
    <location>
        <begin position="590"/>
        <end position="770"/>
    </location>
</feature>
<feature type="active site" evidence="1">
    <location>
        <position position="676"/>
    </location>
</feature>
<feature type="active site" evidence="1">
    <location>
        <position position="719"/>
    </location>
</feature>
<feature type="binding site" evidence="1">
    <location>
        <begin position="354"/>
        <end position="361"/>
    </location>
    <ligand>
        <name>ATP</name>
        <dbReference type="ChEBI" id="CHEBI:30616"/>
    </ligand>
</feature>
<reference key="1">
    <citation type="journal article" date="2004" name="Science">
        <title>A predator unmasked: life cycle of Bdellovibrio bacteriovorus from a genomic perspective.</title>
        <authorList>
            <person name="Rendulic S."/>
            <person name="Jagtap P."/>
            <person name="Rosinus A."/>
            <person name="Eppinger M."/>
            <person name="Baar C."/>
            <person name="Lanz C."/>
            <person name="Keller H."/>
            <person name="Lambert C."/>
            <person name="Evans K.J."/>
            <person name="Goesmann A."/>
            <person name="Meyer F."/>
            <person name="Sockett R.E."/>
            <person name="Schuster S.C."/>
        </authorList>
    </citation>
    <scope>NUCLEOTIDE SEQUENCE [LARGE SCALE GENOMIC DNA]</scope>
    <source>
        <strain>ATCC 15356 / DSM 50701 / NCIMB 9529 / HD100</strain>
    </source>
</reference>
<evidence type="ECO:0000255" key="1">
    <source>
        <dbReference type="HAMAP-Rule" id="MF_01973"/>
    </source>
</evidence>
<evidence type="ECO:0000255" key="2">
    <source>
        <dbReference type="PROSITE-ProRule" id="PRU01122"/>
    </source>
</evidence>
<evidence type="ECO:0000255" key="3">
    <source>
        <dbReference type="PROSITE-ProRule" id="PRU01123"/>
    </source>
</evidence>